<comment type="function">
    <text evidence="3 4">Catalyzes the synthesis of 5,6-dihydrouridine (D), a modified base found in the D-loop of most tRNAs, via the reduction of the C5-C6 double bond in target uridines.</text>
</comment>
<comment type="catalytic activity">
    <reaction evidence="1 3">
        <text>a 5,6-dihydrouridine in tRNA + NAD(+) = a uridine in tRNA + NADH + H(+)</text>
        <dbReference type="Rhea" id="RHEA:54452"/>
        <dbReference type="Rhea" id="RHEA-COMP:13339"/>
        <dbReference type="Rhea" id="RHEA-COMP:13887"/>
        <dbReference type="ChEBI" id="CHEBI:15378"/>
        <dbReference type="ChEBI" id="CHEBI:57540"/>
        <dbReference type="ChEBI" id="CHEBI:57945"/>
        <dbReference type="ChEBI" id="CHEBI:65315"/>
        <dbReference type="ChEBI" id="CHEBI:74443"/>
    </reaction>
</comment>
<comment type="catalytic activity">
    <reaction evidence="1 3">
        <text>a 5,6-dihydrouridine in tRNA + NADP(+) = a uridine in tRNA + NADPH + H(+)</text>
        <dbReference type="Rhea" id="RHEA:23624"/>
        <dbReference type="Rhea" id="RHEA-COMP:13339"/>
        <dbReference type="Rhea" id="RHEA-COMP:13887"/>
        <dbReference type="ChEBI" id="CHEBI:15378"/>
        <dbReference type="ChEBI" id="CHEBI:57783"/>
        <dbReference type="ChEBI" id="CHEBI:58349"/>
        <dbReference type="ChEBI" id="CHEBI:65315"/>
        <dbReference type="ChEBI" id="CHEBI:74443"/>
    </reaction>
</comment>
<comment type="cofactor">
    <cofactor evidence="1 3">
        <name>FMN</name>
        <dbReference type="ChEBI" id="CHEBI:58210"/>
    </cofactor>
</comment>
<comment type="disruption phenotype">
    <text evidence="4">A dusA dusB dusC triple mutant exhibits a complete lack of 5,6-dihydrouridine modification in cellular tRNA, whereas each single mutant exhibits a partial reduction, compared to wild type.</text>
</comment>
<comment type="miscellaneous">
    <text evidence="4">DusB and DusC together account for about half of the 5,6-dihydrouridine modification observed in wild-type cellular tRNA, and DusA accounts for the other half. These three enzymes seem to act site-specifically on the tRNA D-loop and contain nonredundant catalytic functions in vivo.</text>
</comment>
<comment type="similarity">
    <text evidence="3 6">Belongs to the Dus family. DusB subfamily.</text>
</comment>
<sequence length="321" mass="35866">MRIGQYQLRNRLIAAPMAGITDRPFRTLCYEMGAGLTVSEMMSSNPQVWESDKSRLRMVHIDEPGIRTVQIAGSDPKEMADAARINVESGAQIIDINMGCPAKKVNRKLAGSALLQYPDVVKSILTEVVNAVDVPVTLKIRTGWAPEHRNCEEIAQLAEDCGIQALTIHGRTRACLFNGEAEYDSIRAVKQKVSIPVIANGDITDPLKARAVLDYTGADALMIGRAAQGRPWIFREIQHYLDTGELLPPLPLAEVKRLLCAHVRELHDFYGPAKGYRIARKHVSWYLQEHAPNDQFRRTFNAIEDASEQLEALEAYFENFA</sequence>
<proteinExistence type="evidence at protein level"/>
<name>DUSB_ECOLI</name>
<evidence type="ECO:0000250" key="1">
    <source>
        <dbReference type="UniProtKB" id="P33371"/>
    </source>
</evidence>
<evidence type="ECO:0000250" key="2">
    <source>
        <dbReference type="UniProtKB" id="Q5SMC7"/>
    </source>
</evidence>
<evidence type="ECO:0000255" key="3">
    <source>
        <dbReference type="HAMAP-Rule" id="MF_02042"/>
    </source>
</evidence>
<evidence type="ECO:0000269" key="4">
    <source>
    </source>
</evidence>
<evidence type="ECO:0000303" key="5">
    <source>
    </source>
</evidence>
<evidence type="ECO:0000305" key="6"/>
<evidence type="ECO:0007829" key="7">
    <source>
        <dbReference type="PDB" id="6EI9"/>
    </source>
</evidence>
<organism>
    <name type="scientific">Escherichia coli (strain K12)</name>
    <dbReference type="NCBI Taxonomy" id="83333"/>
    <lineage>
        <taxon>Bacteria</taxon>
        <taxon>Pseudomonadati</taxon>
        <taxon>Pseudomonadota</taxon>
        <taxon>Gammaproteobacteria</taxon>
        <taxon>Enterobacterales</taxon>
        <taxon>Enterobacteriaceae</taxon>
        <taxon>Escherichia</taxon>
    </lineage>
</organism>
<keyword id="KW-0002">3D-structure</keyword>
<keyword id="KW-0285">Flavoprotein</keyword>
<keyword id="KW-0288">FMN</keyword>
<keyword id="KW-0521">NADP</keyword>
<keyword id="KW-0560">Oxidoreductase</keyword>
<keyword id="KW-1185">Reference proteome</keyword>
<keyword id="KW-0694">RNA-binding</keyword>
<keyword id="KW-0819">tRNA processing</keyword>
<keyword id="KW-0820">tRNA-binding</keyword>
<gene>
    <name evidence="3 5" type="primary">dusB</name>
    <name type="synonym">yhdG</name>
    <name type="ordered locus">b3260</name>
    <name type="ordered locus">JW3228</name>
</gene>
<dbReference type="EC" id="1.3.1.-" evidence="3 6"/>
<dbReference type="EMBL" id="X62399">
    <property type="protein sequence ID" value="CAA44270.1"/>
    <property type="molecule type" value="Genomic_DNA"/>
</dbReference>
<dbReference type="EMBL" id="M95784">
    <property type="protein sequence ID" value="AAA23782.1"/>
    <property type="molecule type" value="Genomic_DNA"/>
</dbReference>
<dbReference type="EMBL" id="U18997">
    <property type="protein sequence ID" value="AAA58064.1"/>
    <property type="molecule type" value="Genomic_DNA"/>
</dbReference>
<dbReference type="EMBL" id="U00096">
    <property type="protein sequence ID" value="AAC76292.1"/>
    <property type="molecule type" value="Genomic_DNA"/>
</dbReference>
<dbReference type="EMBL" id="AP009048">
    <property type="protein sequence ID" value="BAE77301.1"/>
    <property type="molecule type" value="Genomic_DNA"/>
</dbReference>
<dbReference type="EMBL" id="S67010">
    <property type="protein sequence ID" value="AAB28770.2"/>
    <property type="molecule type" value="Genomic_DNA"/>
</dbReference>
<dbReference type="EMBL" id="J03816">
    <property type="status" value="NOT_ANNOTATED_CDS"/>
    <property type="molecule type" value="Genomic_DNA"/>
</dbReference>
<dbReference type="EMBL" id="J03245">
    <property type="protein sequence ID" value="AAA83855.1"/>
    <property type="molecule type" value="Genomic_DNA"/>
</dbReference>
<dbReference type="PIR" id="B47043">
    <property type="entry name" value="B47043"/>
</dbReference>
<dbReference type="RefSeq" id="NP_417726.1">
    <property type="nucleotide sequence ID" value="NC_000913.3"/>
</dbReference>
<dbReference type="RefSeq" id="WP_001219652.1">
    <property type="nucleotide sequence ID" value="NZ_STEB01000012.1"/>
</dbReference>
<dbReference type="PDB" id="6EI9">
    <property type="method" value="X-ray"/>
    <property type="resolution" value="2.55 A"/>
    <property type="chains" value="A/B=1-321"/>
</dbReference>
<dbReference type="PDBsum" id="6EI9"/>
<dbReference type="SMR" id="P0ABT5"/>
<dbReference type="BioGRID" id="4261865">
    <property type="interactions" value="21"/>
</dbReference>
<dbReference type="DIP" id="DIP-48240N"/>
<dbReference type="FunCoup" id="P0ABT5">
    <property type="interactions" value="726"/>
</dbReference>
<dbReference type="IntAct" id="P0ABT5">
    <property type="interactions" value="4"/>
</dbReference>
<dbReference type="STRING" id="511145.b3260"/>
<dbReference type="jPOST" id="P0ABT5"/>
<dbReference type="PaxDb" id="511145-b3260"/>
<dbReference type="EnsemblBacteria" id="AAC76292">
    <property type="protein sequence ID" value="AAC76292"/>
    <property type="gene ID" value="b3260"/>
</dbReference>
<dbReference type="GeneID" id="93778727"/>
<dbReference type="GeneID" id="947707"/>
<dbReference type="KEGG" id="ecj:JW3228"/>
<dbReference type="KEGG" id="eco:b3260"/>
<dbReference type="KEGG" id="ecoc:C3026_17735"/>
<dbReference type="PATRIC" id="fig|1411691.4.peg.3468"/>
<dbReference type="EchoBASE" id="EB1287"/>
<dbReference type="eggNOG" id="COG0042">
    <property type="taxonomic scope" value="Bacteria"/>
</dbReference>
<dbReference type="HOGENOM" id="CLU_013299_0_1_6"/>
<dbReference type="InParanoid" id="P0ABT5"/>
<dbReference type="OMA" id="QRPHHDI"/>
<dbReference type="OrthoDB" id="9764501at2"/>
<dbReference type="PhylomeDB" id="P0ABT5"/>
<dbReference type="BioCyc" id="EcoCyc:EG11311-MONOMER"/>
<dbReference type="BioCyc" id="MetaCyc:EG11311-MONOMER"/>
<dbReference type="PRO" id="PR:P0ABT5"/>
<dbReference type="Proteomes" id="UP000000625">
    <property type="component" value="Chromosome"/>
</dbReference>
<dbReference type="GO" id="GO:0050660">
    <property type="term" value="F:flavin adenine dinucleotide binding"/>
    <property type="evidence" value="ECO:0007669"/>
    <property type="project" value="InterPro"/>
</dbReference>
<dbReference type="GO" id="GO:0010181">
    <property type="term" value="F:FMN binding"/>
    <property type="evidence" value="ECO:0007669"/>
    <property type="project" value="UniProtKB-UniRule"/>
</dbReference>
<dbReference type="GO" id="GO:0000049">
    <property type="term" value="F:tRNA binding"/>
    <property type="evidence" value="ECO:0007669"/>
    <property type="project" value="UniProtKB-UniRule"/>
</dbReference>
<dbReference type="GO" id="GO:0017150">
    <property type="term" value="F:tRNA dihydrouridine synthase activity"/>
    <property type="evidence" value="ECO:0000315"/>
    <property type="project" value="EcoCyc"/>
</dbReference>
<dbReference type="GO" id="GO:0009314">
    <property type="term" value="P:response to radiation"/>
    <property type="evidence" value="ECO:0000315"/>
    <property type="project" value="EcoCyc"/>
</dbReference>
<dbReference type="CDD" id="cd02801">
    <property type="entry name" value="DUS_like_FMN"/>
    <property type="match status" value="1"/>
</dbReference>
<dbReference type="FunFam" id="1.10.1200.80:FF:000001">
    <property type="entry name" value="tRNA-dihydrouridine synthase B"/>
    <property type="match status" value="1"/>
</dbReference>
<dbReference type="FunFam" id="3.20.20.70:FF:000051">
    <property type="entry name" value="tRNA-dihydrouridine synthase B"/>
    <property type="match status" value="1"/>
</dbReference>
<dbReference type="Gene3D" id="3.20.20.70">
    <property type="entry name" value="Aldolase class I"/>
    <property type="match status" value="1"/>
</dbReference>
<dbReference type="Gene3D" id="1.10.1200.80">
    <property type="entry name" value="Putative flavin oxidoreducatase, domain 2"/>
    <property type="match status" value="1"/>
</dbReference>
<dbReference type="HAMAP" id="MF_02042">
    <property type="entry name" value="DusB_subfam"/>
    <property type="match status" value="1"/>
</dbReference>
<dbReference type="InterPro" id="IPR013785">
    <property type="entry name" value="Aldolase_TIM"/>
</dbReference>
<dbReference type="InterPro" id="IPR035587">
    <property type="entry name" value="DUS-like_FMN-bd"/>
</dbReference>
<dbReference type="InterPro" id="IPR001269">
    <property type="entry name" value="DUS_fam"/>
</dbReference>
<dbReference type="InterPro" id="IPR032887">
    <property type="entry name" value="DusB"/>
</dbReference>
<dbReference type="InterPro" id="IPR004652">
    <property type="entry name" value="DusB-like"/>
</dbReference>
<dbReference type="InterPro" id="IPR024036">
    <property type="entry name" value="tRNA-dHydroUridine_Synthase_C"/>
</dbReference>
<dbReference type="InterPro" id="IPR018517">
    <property type="entry name" value="tRNA_hU_synthase_CS"/>
</dbReference>
<dbReference type="NCBIfam" id="TIGR00737">
    <property type="entry name" value="nifR3_yhdG"/>
    <property type="match status" value="1"/>
</dbReference>
<dbReference type="PANTHER" id="PTHR45846">
    <property type="entry name" value="TRNA-DIHYDROURIDINE(47) SYNTHASE [NAD(P)(+)]-LIKE"/>
    <property type="match status" value="1"/>
</dbReference>
<dbReference type="PANTHER" id="PTHR45846:SF1">
    <property type="entry name" value="TRNA-DIHYDROURIDINE(47) SYNTHASE [NAD(P)(+)]-LIKE"/>
    <property type="match status" value="1"/>
</dbReference>
<dbReference type="Pfam" id="PF01207">
    <property type="entry name" value="Dus"/>
    <property type="match status" value="1"/>
</dbReference>
<dbReference type="PIRSF" id="PIRSF006621">
    <property type="entry name" value="Dus"/>
    <property type="match status" value="1"/>
</dbReference>
<dbReference type="SUPFAM" id="SSF51395">
    <property type="entry name" value="FMN-linked oxidoreductases"/>
    <property type="match status" value="1"/>
</dbReference>
<dbReference type="PROSITE" id="PS01136">
    <property type="entry name" value="UPF0034"/>
    <property type="match status" value="1"/>
</dbReference>
<feature type="chain" id="PRO_0000162084" description="tRNA-dihydrouridine synthase B">
    <location>
        <begin position="1"/>
        <end position="321"/>
    </location>
</feature>
<feature type="active site" description="Proton donor" evidence="2 3">
    <location>
        <position position="100"/>
    </location>
</feature>
<feature type="binding site" evidence="1 3">
    <location>
        <begin position="16"/>
        <end position="18"/>
    </location>
    <ligand>
        <name>FMN</name>
        <dbReference type="ChEBI" id="CHEBI:58210"/>
    </ligand>
</feature>
<feature type="binding site" evidence="1 3">
    <location>
        <position position="70"/>
    </location>
    <ligand>
        <name>FMN</name>
        <dbReference type="ChEBI" id="CHEBI:58210"/>
    </ligand>
</feature>
<feature type="binding site" evidence="1 3">
    <location>
        <position position="139"/>
    </location>
    <ligand>
        <name>FMN</name>
        <dbReference type="ChEBI" id="CHEBI:58210"/>
    </ligand>
</feature>
<feature type="binding site" evidence="1 3">
    <location>
        <begin position="200"/>
        <end position="202"/>
    </location>
    <ligand>
        <name>FMN</name>
        <dbReference type="ChEBI" id="CHEBI:58210"/>
    </ligand>
</feature>
<feature type="binding site" evidence="1 3">
    <location>
        <begin position="224"/>
        <end position="225"/>
    </location>
    <ligand>
        <name>FMN</name>
        <dbReference type="ChEBI" id="CHEBI:58210"/>
    </ligand>
</feature>
<feature type="sequence conflict" description="In Ref. 1; CAA44270." evidence="6" ref="1">
    <original>A</original>
    <variation>R</variation>
    <location>
        <position position="131"/>
    </location>
</feature>
<feature type="sequence conflict" description="In Ref. 1; CAA44270." evidence="6" ref="1">
    <original>H</original>
    <variation>D</variation>
    <location>
        <position position="267"/>
    </location>
</feature>
<feature type="strand" evidence="7">
    <location>
        <begin position="1"/>
        <end position="3"/>
    </location>
</feature>
<feature type="strand" evidence="7">
    <location>
        <begin position="6"/>
        <end position="14"/>
    </location>
</feature>
<feature type="turn" evidence="7">
    <location>
        <begin position="18"/>
        <end position="20"/>
    </location>
</feature>
<feature type="helix" evidence="7">
    <location>
        <begin position="23"/>
        <end position="31"/>
    </location>
</feature>
<feature type="strand" evidence="7">
    <location>
        <begin position="35"/>
        <end position="40"/>
    </location>
</feature>
<feature type="strand" evidence="7">
    <location>
        <begin position="64"/>
        <end position="66"/>
    </location>
</feature>
<feature type="strand" evidence="7">
    <location>
        <begin position="68"/>
        <end position="71"/>
    </location>
</feature>
<feature type="helix" evidence="7">
    <location>
        <begin position="76"/>
        <end position="88"/>
    </location>
</feature>
<feature type="strand" evidence="7">
    <location>
        <begin position="92"/>
        <end position="98"/>
    </location>
</feature>
<feature type="strand" evidence="7">
    <location>
        <begin position="103"/>
        <end position="105"/>
    </location>
</feature>
<feature type="strand" evidence="7">
    <location>
        <begin position="108"/>
        <end position="110"/>
    </location>
</feature>
<feature type="helix" evidence="7">
    <location>
        <begin position="111"/>
        <end position="116"/>
    </location>
</feature>
<feature type="helix" evidence="7">
    <location>
        <begin position="118"/>
        <end position="129"/>
    </location>
</feature>
<feature type="strand" evidence="7">
    <location>
        <begin position="136"/>
        <end position="145"/>
    </location>
</feature>
<feature type="helix" evidence="7">
    <location>
        <begin position="151"/>
        <end position="161"/>
    </location>
</feature>
<feature type="strand" evidence="7">
    <location>
        <begin position="166"/>
        <end position="171"/>
    </location>
</feature>
<feature type="helix" evidence="7">
    <location>
        <begin position="173"/>
        <end position="175"/>
    </location>
</feature>
<feature type="helix" evidence="7">
    <location>
        <begin position="184"/>
        <end position="192"/>
    </location>
</feature>
<feature type="strand" evidence="7">
    <location>
        <begin position="197"/>
        <end position="201"/>
    </location>
</feature>
<feature type="helix" evidence="7">
    <location>
        <begin position="206"/>
        <end position="216"/>
    </location>
</feature>
<feature type="strand" evidence="7">
    <location>
        <begin position="219"/>
        <end position="223"/>
    </location>
</feature>
<feature type="helix" evidence="7">
    <location>
        <begin position="225"/>
        <end position="227"/>
    </location>
</feature>
<feature type="helix" evidence="7">
    <location>
        <begin position="233"/>
        <end position="243"/>
    </location>
</feature>
<feature type="helix" evidence="7">
    <location>
        <begin position="252"/>
        <end position="268"/>
    </location>
</feature>
<feature type="helix" evidence="7">
    <location>
        <begin position="271"/>
        <end position="290"/>
    </location>
</feature>
<feature type="helix" evidence="7">
    <location>
        <begin position="295"/>
        <end position="302"/>
    </location>
</feature>
<feature type="helix" evidence="7">
    <location>
        <begin position="306"/>
        <end position="317"/>
    </location>
</feature>
<feature type="turn" evidence="7">
    <location>
        <begin position="318"/>
        <end position="320"/>
    </location>
</feature>
<protein>
    <recommendedName>
        <fullName evidence="3 5">tRNA-dihydrouridine synthase B</fullName>
        <ecNumber evidence="3 6">1.3.1.-</ecNumber>
    </recommendedName>
</protein>
<accession>P0ABT5</accession>
<accession>P25717</accession>
<accession>Q2M8V5</accession>
<reference key="1">
    <citation type="journal article" date="1992" name="EMBO J.">
        <title>The E.coli fis promoter is subject to stringent control and autoregulation.</title>
        <authorList>
            <person name="Ninnemann O."/>
            <person name="Koch C."/>
            <person name="Kahmann R."/>
        </authorList>
    </citation>
    <scope>NUCLEOTIDE SEQUENCE [GENOMIC DNA]</scope>
    <source>
        <strain>CSH50</strain>
    </source>
</reference>
<reference key="2">
    <citation type="journal article" date="1992" name="J. Bacteriol.">
        <title>Dramatic changes in Fis levels upon nutrient upshift in Escherichia coli.</title>
        <authorList>
            <person name="Ball C.A."/>
            <person name="Osuna R."/>
            <person name="Ferguson K.C."/>
            <person name="Johnson R.C."/>
        </authorList>
    </citation>
    <scope>NUCLEOTIDE SEQUENCE [GENOMIC DNA]</scope>
</reference>
<reference key="3">
    <citation type="journal article" date="1997" name="Science">
        <title>The complete genome sequence of Escherichia coli K-12.</title>
        <authorList>
            <person name="Blattner F.R."/>
            <person name="Plunkett G. III"/>
            <person name="Bloch C.A."/>
            <person name="Perna N.T."/>
            <person name="Burland V."/>
            <person name="Riley M."/>
            <person name="Collado-Vides J."/>
            <person name="Glasner J.D."/>
            <person name="Rode C.K."/>
            <person name="Mayhew G.F."/>
            <person name="Gregor J."/>
            <person name="Davis N.W."/>
            <person name="Kirkpatrick H.A."/>
            <person name="Goeden M.A."/>
            <person name="Rose D.J."/>
            <person name="Mau B."/>
            <person name="Shao Y."/>
        </authorList>
    </citation>
    <scope>NUCLEOTIDE SEQUENCE [LARGE SCALE GENOMIC DNA]</scope>
    <source>
        <strain>K12 / MG1655 / ATCC 47076</strain>
    </source>
</reference>
<reference key="4">
    <citation type="journal article" date="2006" name="Mol. Syst. Biol.">
        <title>Highly accurate genome sequences of Escherichia coli K-12 strains MG1655 and W3110.</title>
        <authorList>
            <person name="Hayashi K."/>
            <person name="Morooka N."/>
            <person name="Yamamoto Y."/>
            <person name="Fujita K."/>
            <person name="Isono K."/>
            <person name="Choi S."/>
            <person name="Ohtsubo E."/>
            <person name="Baba T."/>
            <person name="Wanner B.L."/>
            <person name="Mori H."/>
            <person name="Horiuchi T."/>
        </authorList>
    </citation>
    <scope>NUCLEOTIDE SEQUENCE [LARGE SCALE GENOMIC DNA]</scope>
    <source>
        <strain>K12 / W3110 / ATCC 27325 / DSM 5911</strain>
    </source>
</reference>
<reference key="5">
    <citation type="journal article" date="1993" name="J. Bacteriol.">
        <title>Cotranscription of two genes necessary for ribosomal protein L11 methylation (prmA) and pantothenate transport (panF) in Escherichia coli K-12.</title>
        <authorList>
            <person name="Vanet A."/>
            <person name="Plumbridge J.A."/>
            <person name="Alix J.-H."/>
        </authorList>
    </citation>
    <scope>NUCLEOTIDE SEQUENCE [GENOMIC DNA] OF 1-25</scope>
</reference>
<reference key="6">
    <citation type="journal article" date="1988" name="Proc. Natl. Acad. Sci. U.S.A.">
        <title>Escherichia coli host factor for site-specific DNA inversion: cloning and characterization of the fis gene.</title>
        <authorList>
            <person name="Koch C."/>
            <person name="Vanderkerckhove J."/>
            <person name="Kahmann R."/>
        </authorList>
    </citation>
    <scope>NUCLEOTIDE SEQUENCE [GENOMIC DNA] OF 276-321</scope>
</reference>
<reference key="7">
    <citation type="journal article" date="1988" name="Proc. Natl. Acad. Sci. U.S.A.">
        <title>Isolation of the gene encoding the Hin recombinational enhancer binding protein.</title>
        <authorList>
            <person name="Johnson R.C."/>
            <person name="Ball C.A."/>
            <person name="Pfeffer D."/>
            <person name="Simon M.I."/>
        </authorList>
    </citation>
    <scope>NUCLEOTIDE SEQUENCE [GENOMIC DNA] OF 312-321</scope>
    <source>
        <strain>K12</strain>
    </source>
</reference>
<reference key="8">
    <citation type="journal article" date="2002" name="J. Biol. Chem.">
        <title>Identification of the tRNA-dihydrouridine synthase family.</title>
        <authorList>
            <person name="Bishop A.C."/>
            <person name="Xu J."/>
            <person name="Johnson R.C."/>
            <person name="Schimmel P."/>
            <person name="de Crecy-Lagard V."/>
        </authorList>
    </citation>
    <scope>FUNCTION</scope>
    <scope>DISRUPTION PHENOTYPE</scope>
    <source>
        <strain>K12</strain>
    </source>
</reference>